<gene>
    <name type="primary">acpP</name>
    <name type="synonym">acp</name>
</gene>
<reference key="1">
    <citation type="journal article" date="1992" name="Infect. Immun.">
        <title>Nucleotide sequence and transcriptional regulation of a positive regulatory gene of Shigella dysenteriae.</title>
        <authorList>
            <person name="Yao R."/>
            <person name="Palchaudhuri S."/>
        </authorList>
    </citation>
    <scope>NUCLEOTIDE SEQUENCE [GENOMIC DNA]</scope>
    <source>
        <strain>CG097</strain>
    </source>
</reference>
<evidence type="ECO:0000250" key="1"/>
<evidence type="ECO:0000255" key="2">
    <source>
        <dbReference type="PROSITE-ProRule" id="PRU00258"/>
    </source>
</evidence>
<evidence type="ECO:0000305" key="3"/>
<name>ACP_SHIDY</name>
<keyword id="KW-0963">Cytoplasm</keyword>
<keyword id="KW-0275">Fatty acid biosynthesis</keyword>
<keyword id="KW-0276">Fatty acid metabolism</keyword>
<keyword id="KW-0444">Lipid biosynthesis</keyword>
<keyword id="KW-0443">Lipid metabolism</keyword>
<keyword id="KW-0596">Phosphopantetheine</keyword>
<keyword id="KW-0597">Phosphoprotein</keyword>
<keyword id="KW-0614">Plasmid</keyword>
<dbReference type="EMBL" id="X63593">
    <property type="protein sequence ID" value="CAA45136.1"/>
    <property type="molecule type" value="Genomic_DNA"/>
</dbReference>
<dbReference type="PIR" id="C43859">
    <property type="entry name" value="C43859"/>
</dbReference>
<dbReference type="RefSeq" id="WP_000588812.1">
    <property type="nucleotide sequence ID" value="NZ_QXIH01000021.1"/>
</dbReference>
<dbReference type="SMR" id="P0A1A0"/>
<dbReference type="UniPathway" id="UPA00094"/>
<dbReference type="GO" id="GO:0005737">
    <property type="term" value="C:cytoplasm"/>
    <property type="evidence" value="ECO:0007669"/>
    <property type="project" value="UniProtKB-SubCell"/>
</dbReference>
<dbReference type="GO" id="GO:0000036">
    <property type="term" value="F:acyl carrier activity"/>
    <property type="evidence" value="ECO:0007669"/>
    <property type="project" value="UniProtKB-UniRule"/>
</dbReference>
<dbReference type="Gene3D" id="1.10.1200.10">
    <property type="entry name" value="ACP-like"/>
    <property type="match status" value="1"/>
</dbReference>
<dbReference type="InterPro" id="IPR003231">
    <property type="entry name" value="ACP"/>
</dbReference>
<dbReference type="InterPro" id="IPR036736">
    <property type="entry name" value="ACP-like_sf"/>
</dbReference>
<dbReference type="InterPro" id="IPR009081">
    <property type="entry name" value="PP-bd_ACP"/>
</dbReference>
<dbReference type="Pfam" id="PF00550">
    <property type="entry name" value="PP-binding"/>
    <property type="match status" value="1"/>
</dbReference>
<dbReference type="SUPFAM" id="SSF47336">
    <property type="entry name" value="ACP-like"/>
    <property type="match status" value="1"/>
</dbReference>
<dbReference type="PROSITE" id="PS50075">
    <property type="entry name" value="CARRIER"/>
    <property type="match status" value="1"/>
</dbReference>
<accession>P0A1A0</accession>
<accession>Q53972</accession>
<accession>Q8VSH9</accession>
<proteinExistence type="inferred from homology"/>
<organism>
    <name type="scientific">Shigella dysenteriae</name>
    <dbReference type="NCBI Taxonomy" id="622"/>
    <lineage>
        <taxon>Bacteria</taxon>
        <taxon>Pseudomonadati</taxon>
        <taxon>Pseudomonadota</taxon>
        <taxon>Gammaproteobacteria</taxon>
        <taxon>Enterobacterales</taxon>
        <taxon>Enterobacteriaceae</taxon>
        <taxon>Shigella</taxon>
    </lineage>
</organism>
<comment type="function">
    <text evidence="1">Carrier of the growing fatty acid chain in fatty acid biosynthesis.</text>
</comment>
<comment type="pathway">
    <text>Lipid metabolism; fatty acid biosynthesis.</text>
</comment>
<comment type="subcellular location">
    <subcellularLocation>
        <location evidence="1">Cytoplasm</location>
    </subcellularLocation>
</comment>
<comment type="PTM">
    <text evidence="1">4'-phosphopantetheine is transferred from CoA to a specific serine of apo-ACP by AcpS. This modification is essential for activity because fatty acids are bound in thioester linkage to the sulfhydryl of the prosthetic group (By similarity).</text>
</comment>
<comment type="similarity">
    <text evidence="3">Belongs to the acyl carrier protein (ACP) family.</text>
</comment>
<geneLocation type="plasmid">
    <name>Invasion</name>
</geneLocation>
<protein>
    <recommendedName>
        <fullName>Acyl carrier protein</fullName>
        <shortName>ACP</shortName>
    </recommendedName>
</protein>
<feature type="chain" id="PRO_0000180185" description="Acyl carrier protein">
    <location>
        <begin position="1"/>
        <end position="78"/>
    </location>
</feature>
<feature type="domain" description="Carrier" evidence="2">
    <location>
        <begin position="11"/>
        <end position="75"/>
    </location>
</feature>
<feature type="modified residue" description="O-(pantetheine 4'-phosphoryl)serine" evidence="2">
    <location>
        <position position="35"/>
    </location>
</feature>
<sequence length="78" mass="8775">MIKEKILSIVAFCYGIAYSKLSEETKFIEDLSADSLSLIEMLDMISFEFNLRIDESALEHIITIGDLISVVKNSTKSI</sequence>